<feature type="chain" id="PRO_0000276080" description="Photosystem I reaction center subunit IX">
    <location>
        <begin position="1"/>
        <end position="41"/>
    </location>
</feature>
<feature type="transmembrane region" description="Helical" evidence="1">
    <location>
        <begin position="7"/>
        <end position="27"/>
    </location>
</feature>
<dbReference type="EMBL" id="DQ630521">
    <property type="protein sequence ID" value="ABF60164.1"/>
    <property type="molecule type" value="Genomic_DNA"/>
</dbReference>
<dbReference type="RefSeq" id="YP_764395.1">
    <property type="nucleotide sequence ID" value="NC_008372.1"/>
</dbReference>
<dbReference type="SMR" id="Q06SH1"/>
<dbReference type="GeneID" id="4308407"/>
<dbReference type="GO" id="GO:0009535">
    <property type="term" value="C:chloroplast thylakoid membrane"/>
    <property type="evidence" value="ECO:0007669"/>
    <property type="project" value="UniProtKB-SubCell"/>
</dbReference>
<dbReference type="GO" id="GO:0009522">
    <property type="term" value="C:photosystem I"/>
    <property type="evidence" value="ECO:0007669"/>
    <property type="project" value="UniProtKB-KW"/>
</dbReference>
<dbReference type="GO" id="GO:0015979">
    <property type="term" value="P:photosynthesis"/>
    <property type="evidence" value="ECO:0007669"/>
    <property type="project" value="UniProtKB-UniRule"/>
</dbReference>
<dbReference type="Gene3D" id="1.20.5.510">
    <property type="entry name" value="Single helix bin"/>
    <property type="match status" value="1"/>
</dbReference>
<dbReference type="HAMAP" id="MF_00522">
    <property type="entry name" value="PSI_PsaJ"/>
    <property type="match status" value="1"/>
</dbReference>
<dbReference type="InterPro" id="IPR002615">
    <property type="entry name" value="PSI_PsaJ"/>
</dbReference>
<dbReference type="InterPro" id="IPR036062">
    <property type="entry name" value="PSI_PsaJ_sf"/>
</dbReference>
<dbReference type="PANTHER" id="PTHR36082">
    <property type="match status" value="1"/>
</dbReference>
<dbReference type="PANTHER" id="PTHR36082:SF2">
    <property type="entry name" value="PHOTOSYSTEM I REACTION CENTER SUBUNIT IX"/>
    <property type="match status" value="1"/>
</dbReference>
<dbReference type="Pfam" id="PF01701">
    <property type="entry name" value="PSI_PsaJ"/>
    <property type="match status" value="1"/>
</dbReference>
<dbReference type="SUPFAM" id="SSF81544">
    <property type="entry name" value="Subunit IX of photosystem I reaction centre, PsaJ"/>
    <property type="match status" value="1"/>
</dbReference>
<name>PSAJ_STIHE</name>
<accession>Q06SH1</accession>
<protein>
    <recommendedName>
        <fullName evidence="1">Photosystem I reaction center subunit IX</fullName>
    </recommendedName>
    <alternativeName>
        <fullName evidence="1">PSI-J</fullName>
    </alternativeName>
</protein>
<sequence>MKDFKIYLSTAPVVAFAWLTFTAGFIIEINRFFPDPLVFSF</sequence>
<proteinExistence type="inferred from homology"/>
<keyword id="KW-0150">Chloroplast</keyword>
<keyword id="KW-0472">Membrane</keyword>
<keyword id="KW-0602">Photosynthesis</keyword>
<keyword id="KW-0603">Photosystem I</keyword>
<keyword id="KW-0934">Plastid</keyword>
<keyword id="KW-0793">Thylakoid</keyword>
<keyword id="KW-0812">Transmembrane</keyword>
<keyword id="KW-1133">Transmembrane helix</keyword>
<gene>
    <name evidence="1" type="primary">psaJ</name>
</gene>
<comment type="function">
    <text evidence="1">May help in the organization of the PsaE and PsaF subunits.</text>
</comment>
<comment type="subcellular location">
    <subcellularLocation>
        <location evidence="1">Plastid</location>
        <location evidence="1">Chloroplast thylakoid membrane</location>
        <topology evidence="1">Single-pass membrane protein</topology>
    </subcellularLocation>
</comment>
<comment type="similarity">
    <text evidence="1">Belongs to the PsaJ family.</text>
</comment>
<evidence type="ECO:0000255" key="1">
    <source>
        <dbReference type="HAMAP-Rule" id="MF_00522"/>
    </source>
</evidence>
<organism>
    <name type="scientific">Stigeoclonium helveticum</name>
    <name type="common">Green alga</name>
    <dbReference type="NCBI Taxonomy" id="55999"/>
    <lineage>
        <taxon>Eukaryota</taxon>
        <taxon>Viridiplantae</taxon>
        <taxon>Chlorophyta</taxon>
        <taxon>core chlorophytes</taxon>
        <taxon>Chlorophyceae</taxon>
        <taxon>OCC clade</taxon>
        <taxon>Chaetophorales</taxon>
        <taxon>Chaetophoraceae</taxon>
        <taxon>Stigeoclonium</taxon>
    </lineage>
</organism>
<geneLocation type="chloroplast"/>
<reference key="1">
    <citation type="journal article" date="2006" name="Mol. Genet. Genomics">
        <title>Distinctive architecture of the chloroplast genome in the chlorophycean green alga Stigeoclonium helveticum.</title>
        <authorList>
            <person name="Belanger A.-S."/>
            <person name="Brouard J.-S."/>
            <person name="Charlebois P."/>
            <person name="Otis C."/>
            <person name="Lemieux C."/>
            <person name="Turmel M."/>
        </authorList>
    </citation>
    <scope>NUCLEOTIDE SEQUENCE [LARGE SCALE GENOMIC DNA]</scope>
    <source>
        <strain>UTEX 441</strain>
    </source>
</reference>